<feature type="chain" id="PRO_0000363470" description="Pentatricopeptide repeat-containing protein At4g37170">
    <location>
        <begin position="1"/>
        <end position="691"/>
    </location>
</feature>
<feature type="repeat" description="PPR 1">
    <location>
        <begin position="84"/>
        <end position="118"/>
    </location>
</feature>
<feature type="repeat" description="PPR 2">
    <location>
        <begin position="119"/>
        <end position="149"/>
    </location>
</feature>
<feature type="repeat" description="PPR 3">
    <location>
        <begin position="150"/>
        <end position="184"/>
    </location>
</feature>
<feature type="repeat" description="PPR 4">
    <location>
        <begin position="185"/>
        <end position="211"/>
    </location>
</feature>
<feature type="repeat" description="PPR 5">
    <location>
        <begin position="217"/>
        <end position="251"/>
    </location>
</feature>
<feature type="repeat" description="PPR 6">
    <location>
        <begin position="252"/>
        <end position="286"/>
    </location>
</feature>
<feature type="repeat" description="PPR 7">
    <location>
        <begin position="287"/>
        <end position="317"/>
    </location>
</feature>
<feature type="repeat" description="PPR 8">
    <location>
        <begin position="318"/>
        <end position="352"/>
    </location>
</feature>
<feature type="repeat" description="PPR 9">
    <location>
        <begin position="353"/>
        <end position="383"/>
    </location>
</feature>
<feature type="repeat" description="PPR 10">
    <location>
        <begin position="384"/>
        <end position="418"/>
    </location>
</feature>
<feature type="repeat" description="PPR 11">
    <location>
        <begin position="419"/>
        <end position="449"/>
    </location>
</feature>
<feature type="repeat" description="PPR 12">
    <location>
        <begin position="455"/>
        <end position="485"/>
    </location>
</feature>
<feature type="region of interest" description="Type E motif">
    <location>
        <begin position="490"/>
        <end position="565"/>
    </location>
</feature>
<feature type="region of interest" description="Type E(+) motif">
    <location>
        <begin position="566"/>
        <end position="596"/>
    </location>
</feature>
<feature type="region of interest" description="Type DYW motif">
    <location>
        <begin position="597"/>
        <end position="691"/>
    </location>
</feature>
<name>PP353_ARATH</name>
<evidence type="ECO:0000305" key="1"/>
<accession>O23169</accession>
<gene>
    <name type="primary">PCMP-H5</name>
    <name type="ordered locus">At4g37170</name>
    <name type="ORF">AP22.43</name>
    <name type="ORF">C7A10.190</name>
</gene>
<proteinExistence type="inferred from homology"/>
<protein>
    <recommendedName>
        <fullName>Pentatricopeptide repeat-containing protein At4g37170</fullName>
    </recommendedName>
</protein>
<sequence>MNHSNARKLTTLHGFILKRNLSSFHASLKRFSDKKFFNPNHEDGGVVVERLCRANRFGEAIDVLCGQKLLREAVQLLGRAKKPPASTYCNLIQVCSQTRALEEGKKVHEHIRTSGFVPGIVIWNRLLRMYAKCGSLVDARKVFDEMPNRDLCSWNVMVNGYAEVGLLEEARKLFDEMTEKDSYSWTAMVTGYVKKDQPEEALVLYSLMQRVPNSRPNIFTVSIAVAAAAAVKCIRRGKEIHGHIVRAGLDSDEVLWSSLMDMYGKCGCIDEARNIFDKIVEKDVVSWTSMIDRYFKSSRWREGFSLFSELVGSCERPNEYTFAGVLNACADLTTEELGKQVHGYMTRVGFDPYSFASSSLVDMYTKCGNIESAKHVVDGCPKPDLVSWTSLIGGCAQNGQPDEALKYFDLLLKSGTKPDHVTFVNVLSACTHAGLVEKGLEFFYSITEKHRLSHTSDHYTCLVDLLARSGRFEQLKSVISEMPMKPSKFLWASVLGGCSTYGNIDLAEEAAQELFKIEPENPVTYVTMANIYAAAGKWEEEGKMRKRMQEIGVTKRPGSSWTEIKRKRHVFIAADTSHPMYNQIVEFLRELRKKMKEEGYVPATSLVLHDVEDEQKEENLVYHSEKLAVAFAILSTEEGTAIKVFKNLRSCVDCHGAIKFISNITKRKITVRDSTRFHCFENGQCSCGDYW</sequence>
<organism>
    <name type="scientific">Arabidopsis thaliana</name>
    <name type="common">Mouse-ear cress</name>
    <dbReference type="NCBI Taxonomy" id="3702"/>
    <lineage>
        <taxon>Eukaryota</taxon>
        <taxon>Viridiplantae</taxon>
        <taxon>Streptophyta</taxon>
        <taxon>Embryophyta</taxon>
        <taxon>Tracheophyta</taxon>
        <taxon>Spermatophyta</taxon>
        <taxon>Magnoliopsida</taxon>
        <taxon>eudicotyledons</taxon>
        <taxon>Gunneridae</taxon>
        <taxon>Pentapetalae</taxon>
        <taxon>rosids</taxon>
        <taxon>malvids</taxon>
        <taxon>Brassicales</taxon>
        <taxon>Brassicaceae</taxon>
        <taxon>Camelineae</taxon>
        <taxon>Arabidopsis</taxon>
    </lineage>
</organism>
<dbReference type="EMBL" id="Z99707">
    <property type="protein sequence ID" value="CAB16758.1"/>
    <property type="molecule type" value="Genomic_DNA"/>
</dbReference>
<dbReference type="EMBL" id="AL161590">
    <property type="protein sequence ID" value="CAB80383.1"/>
    <property type="molecule type" value="Genomic_DNA"/>
</dbReference>
<dbReference type="EMBL" id="CP002687">
    <property type="protein sequence ID" value="AEE86761.1"/>
    <property type="molecule type" value="Genomic_DNA"/>
</dbReference>
<dbReference type="PIR" id="B85439">
    <property type="entry name" value="B85439"/>
</dbReference>
<dbReference type="RefSeq" id="NP_195434.1">
    <property type="nucleotide sequence ID" value="NM_119880.2"/>
</dbReference>
<dbReference type="SMR" id="O23169"/>
<dbReference type="FunCoup" id="O23169">
    <property type="interactions" value="328"/>
</dbReference>
<dbReference type="PaxDb" id="3702-AT4G37170.1"/>
<dbReference type="ProteomicsDB" id="249247"/>
<dbReference type="EnsemblPlants" id="AT4G37170.1">
    <property type="protein sequence ID" value="AT4G37170.1"/>
    <property type="gene ID" value="AT4G37170"/>
</dbReference>
<dbReference type="GeneID" id="829871"/>
<dbReference type="Gramene" id="AT4G37170.1">
    <property type="protein sequence ID" value="AT4G37170.1"/>
    <property type="gene ID" value="AT4G37170"/>
</dbReference>
<dbReference type="KEGG" id="ath:AT4G37170"/>
<dbReference type="Araport" id="AT4G37170"/>
<dbReference type="TAIR" id="AT4G37170"/>
<dbReference type="eggNOG" id="KOG4197">
    <property type="taxonomic scope" value="Eukaryota"/>
</dbReference>
<dbReference type="HOGENOM" id="CLU_002706_15_1_1"/>
<dbReference type="InParanoid" id="O23169"/>
<dbReference type="OMA" id="RMQEEPG"/>
<dbReference type="PhylomeDB" id="O23169"/>
<dbReference type="PRO" id="PR:O23169"/>
<dbReference type="Proteomes" id="UP000006548">
    <property type="component" value="Chromosome 4"/>
</dbReference>
<dbReference type="ExpressionAtlas" id="O23169">
    <property type="expression patterns" value="baseline and differential"/>
</dbReference>
<dbReference type="GO" id="GO:0003723">
    <property type="term" value="F:RNA binding"/>
    <property type="evidence" value="ECO:0007669"/>
    <property type="project" value="InterPro"/>
</dbReference>
<dbReference type="GO" id="GO:0008270">
    <property type="term" value="F:zinc ion binding"/>
    <property type="evidence" value="ECO:0007669"/>
    <property type="project" value="InterPro"/>
</dbReference>
<dbReference type="GO" id="GO:0009451">
    <property type="term" value="P:RNA modification"/>
    <property type="evidence" value="ECO:0007669"/>
    <property type="project" value="InterPro"/>
</dbReference>
<dbReference type="FunFam" id="1.25.40.10:FF:000366">
    <property type="entry name" value="Pentatricopeptide (PPR) repeat-containing protein"/>
    <property type="match status" value="1"/>
</dbReference>
<dbReference type="FunFam" id="1.25.40.10:FF:000284">
    <property type="entry name" value="Pentatricopeptide repeat-containing protein"/>
    <property type="match status" value="1"/>
</dbReference>
<dbReference type="FunFam" id="1.25.40.10:FF:001695">
    <property type="entry name" value="Pentatricopeptide repeat-containing protein At4g37170"/>
    <property type="match status" value="1"/>
</dbReference>
<dbReference type="FunFam" id="1.25.40.10:FF:000031">
    <property type="entry name" value="Pentatricopeptide repeat-containing protein mitochondrial"/>
    <property type="match status" value="1"/>
</dbReference>
<dbReference type="Gene3D" id="1.25.40.10">
    <property type="entry name" value="Tetratricopeptide repeat domain"/>
    <property type="match status" value="5"/>
</dbReference>
<dbReference type="InterPro" id="IPR032867">
    <property type="entry name" value="DYW_dom"/>
</dbReference>
<dbReference type="InterPro" id="IPR046848">
    <property type="entry name" value="E_motif"/>
</dbReference>
<dbReference type="InterPro" id="IPR002885">
    <property type="entry name" value="Pentatricopeptide_rpt"/>
</dbReference>
<dbReference type="InterPro" id="IPR046960">
    <property type="entry name" value="PPR_At4g14850-like_plant"/>
</dbReference>
<dbReference type="InterPro" id="IPR011990">
    <property type="entry name" value="TPR-like_helical_dom_sf"/>
</dbReference>
<dbReference type="NCBIfam" id="TIGR00756">
    <property type="entry name" value="PPR"/>
    <property type="match status" value="6"/>
</dbReference>
<dbReference type="PANTHER" id="PTHR47926">
    <property type="entry name" value="PENTATRICOPEPTIDE REPEAT-CONTAINING PROTEIN"/>
    <property type="match status" value="1"/>
</dbReference>
<dbReference type="PANTHER" id="PTHR47926:SF414">
    <property type="entry name" value="PENTATRICOPEPTIDE REPEAT-CONTAINING PROTEIN DOT4, CHLOROPLASTIC-LIKE"/>
    <property type="match status" value="1"/>
</dbReference>
<dbReference type="Pfam" id="PF14432">
    <property type="entry name" value="DYW_deaminase"/>
    <property type="match status" value="1"/>
</dbReference>
<dbReference type="Pfam" id="PF20431">
    <property type="entry name" value="E_motif"/>
    <property type="match status" value="1"/>
</dbReference>
<dbReference type="Pfam" id="PF01535">
    <property type="entry name" value="PPR"/>
    <property type="match status" value="5"/>
</dbReference>
<dbReference type="Pfam" id="PF13041">
    <property type="entry name" value="PPR_2"/>
    <property type="match status" value="2"/>
</dbReference>
<dbReference type="SUPFAM" id="SSF48452">
    <property type="entry name" value="TPR-like"/>
    <property type="match status" value="1"/>
</dbReference>
<dbReference type="PROSITE" id="PS51375">
    <property type="entry name" value="PPR"/>
    <property type="match status" value="13"/>
</dbReference>
<reference key="1">
    <citation type="journal article" date="1998" name="Nature">
        <title>Analysis of 1.9 Mb of contiguous sequence from chromosome 4 of Arabidopsis thaliana.</title>
        <authorList>
            <person name="Bevan M."/>
            <person name="Bancroft I."/>
            <person name="Bent E."/>
            <person name="Love K."/>
            <person name="Goodman H.M."/>
            <person name="Dean C."/>
            <person name="Bergkamp R."/>
            <person name="Dirkse W."/>
            <person name="van Staveren M."/>
            <person name="Stiekema W."/>
            <person name="Drost L."/>
            <person name="Ridley P."/>
            <person name="Hudson S.-A."/>
            <person name="Patel K."/>
            <person name="Murphy G."/>
            <person name="Piffanelli P."/>
            <person name="Wedler H."/>
            <person name="Wedler E."/>
            <person name="Wambutt R."/>
            <person name="Weitzenegger T."/>
            <person name="Pohl T."/>
            <person name="Terryn N."/>
            <person name="Gielen J."/>
            <person name="Villarroel R."/>
            <person name="De Clercq R."/>
            <person name="van Montagu M."/>
            <person name="Lecharny A."/>
            <person name="Aubourg S."/>
            <person name="Gy I."/>
            <person name="Kreis M."/>
            <person name="Lao N."/>
            <person name="Kavanagh T."/>
            <person name="Hempel S."/>
            <person name="Kotter P."/>
            <person name="Entian K.-D."/>
            <person name="Rieger M."/>
            <person name="Schaefer M."/>
            <person name="Funk B."/>
            <person name="Mueller-Auer S."/>
            <person name="Silvey M."/>
            <person name="James R."/>
            <person name="Monfort A."/>
            <person name="Pons A."/>
            <person name="Puigdomenech P."/>
            <person name="Douka A."/>
            <person name="Voukelatou E."/>
            <person name="Milioni D."/>
            <person name="Hatzopoulos P."/>
            <person name="Piravandi E."/>
            <person name="Obermaier B."/>
            <person name="Hilbert H."/>
            <person name="Duesterhoeft A."/>
            <person name="Moores T."/>
            <person name="Jones J.D.G."/>
            <person name="Eneva T."/>
            <person name="Palme K."/>
            <person name="Benes V."/>
            <person name="Rechmann S."/>
            <person name="Ansorge W."/>
            <person name="Cooke R."/>
            <person name="Berger C."/>
            <person name="Delseny M."/>
            <person name="Voet M."/>
            <person name="Volckaert G."/>
            <person name="Mewes H.-W."/>
            <person name="Klosterman S."/>
            <person name="Schueller C."/>
            <person name="Chalwatzis N."/>
        </authorList>
    </citation>
    <scope>NUCLEOTIDE SEQUENCE [LARGE SCALE GENOMIC DNA]</scope>
    <source>
        <strain>cv. Columbia</strain>
    </source>
</reference>
<reference key="2">
    <citation type="journal article" date="1999" name="Nature">
        <title>Sequence and analysis of chromosome 4 of the plant Arabidopsis thaliana.</title>
        <authorList>
            <person name="Mayer K.F.X."/>
            <person name="Schueller C."/>
            <person name="Wambutt R."/>
            <person name="Murphy G."/>
            <person name="Volckaert G."/>
            <person name="Pohl T."/>
            <person name="Duesterhoeft A."/>
            <person name="Stiekema W."/>
            <person name="Entian K.-D."/>
            <person name="Terryn N."/>
            <person name="Harris B."/>
            <person name="Ansorge W."/>
            <person name="Brandt P."/>
            <person name="Grivell L.A."/>
            <person name="Rieger M."/>
            <person name="Weichselgartner M."/>
            <person name="de Simone V."/>
            <person name="Obermaier B."/>
            <person name="Mache R."/>
            <person name="Mueller M."/>
            <person name="Kreis M."/>
            <person name="Delseny M."/>
            <person name="Puigdomenech P."/>
            <person name="Watson M."/>
            <person name="Schmidtheini T."/>
            <person name="Reichert B."/>
            <person name="Portetelle D."/>
            <person name="Perez-Alonso M."/>
            <person name="Boutry M."/>
            <person name="Bancroft I."/>
            <person name="Vos P."/>
            <person name="Hoheisel J."/>
            <person name="Zimmermann W."/>
            <person name="Wedler H."/>
            <person name="Ridley P."/>
            <person name="Langham S.-A."/>
            <person name="McCullagh B."/>
            <person name="Bilham L."/>
            <person name="Robben J."/>
            <person name="van der Schueren J."/>
            <person name="Grymonprez B."/>
            <person name="Chuang Y.-J."/>
            <person name="Vandenbussche F."/>
            <person name="Braeken M."/>
            <person name="Weltjens I."/>
            <person name="Voet M."/>
            <person name="Bastiaens I."/>
            <person name="Aert R."/>
            <person name="Defoor E."/>
            <person name="Weitzenegger T."/>
            <person name="Bothe G."/>
            <person name="Ramsperger U."/>
            <person name="Hilbert H."/>
            <person name="Braun M."/>
            <person name="Holzer E."/>
            <person name="Brandt A."/>
            <person name="Peters S."/>
            <person name="van Staveren M."/>
            <person name="Dirkse W."/>
            <person name="Mooijman P."/>
            <person name="Klein Lankhorst R."/>
            <person name="Rose M."/>
            <person name="Hauf J."/>
            <person name="Koetter P."/>
            <person name="Berneiser S."/>
            <person name="Hempel S."/>
            <person name="Feldpausch M."/>
            <person name="Lamberth S."/>
            <person name="Van den Daele H."/>
            <person name="De Keyser A."/>
            <person name="Buysshaert C."/>
            <person name="Gielen J."/>
            <person name="Villarroel R."/>
            <person name="De Clercq R."/>
            <person name="van Montagu M."/>
            <person name="Rogers J."/>
            <person name="Cronin A."/>
            <person name="Quail M.A."/>
            <person name="Bray-Allen S."/>
            <person name="Clark L."/>
            <person name="Doggett J."/>
            <person name="Hall S."/>
            <person name="Kay M."/>
            <person name="Lennard N."/>
            <person name="McLay K."/>
            <person name="Mayes R."/>
            <person name="Pettett A."/>
            <person name="Rajandream M.A."/>
            <person name="Lyne M."/>
            <person name="Benes V."/>
            <person name="Rechmann S."/>
            <person name="Borkova D."/>
            <person name="Bloecker H."/>
            <person name="Scharfe M."/>
            <person name="Grimm M."/>
            <person name="Loehnert T.-H."/>
            <person name="Dose S."/>
            <person name="de Haan M."/>
            <person name="Maarse A.C."/>
            <person name="Schaefer M."/>
            <person name="Mueller-Auer S."/>
            <person name="Gabel C."/>
            <person name="Fuchs M."/>
            <person name="Fartmann B."/>
            <person name="Granderath K."/>
            <person name="Dauner D."/>
            <person name="Herzl A."/>
            <person name="Neumann S."/>
            <person name="Argiriou A."/>
            <person name="Vitale D."/>
            <person name="Liguori R."/>
            <person name="Piravandi E."/>
            <person name="Massenet O."/>
            <person name="Quigley F."/>
            <person name="Clabauld G."/>
            <person name="Muendlein A."/>
            <person name="Felber R."/>
            <person name="Schnabl S."/>
            <person name="Hiller R."/>
            <person name="Schmidt W."/>
            <person name="Lecharny A."/>
            <person name="Aubourg S."/>
            <person name="Chefdor F."/>
            <person name="Cooke R."/>
            <person name="Berger C."/>
            <person name="Monfort A."/>
            <person name="Casacuberta E."/>
            <person name="Gibbons T."/>
            <person name="Weber N."/>
            <person name="Vandenbol M."/>
            <person name="Bargues M."/>
            <person name="Terol J."/>
            <person name="Torres A."/>
            <person name="Perez-Perez A."/>
            <person name="Purnelle B."/>
            <person name="Bent E."/>
            <person name="Johnson S."/>
            <person name="Tacon D."/>
            <person name="Jesse T."/>
            <person name="Heijnen L."/>
            <person name="Schwarz S."/>
            <person name="Scholler P."/>
            <person name="Heber S."/>
            <person name="Francs P."/>
            <person name="Bielke C."/>
            <person name="Frishman D."/>
            <person name="Haase D."/>
            <person name="Lemcke K."/>
            <person name="Mewes H.-W."/>
            <person name="Stocker S."/>
            <person name="Zaccaria P."/>
            <person name="Bevan M."/>
            <person name="Wilson R.K."/>
            <person name="de la Bastide M."/>
            <person name="Habermann K."/>
            <person name="Parnell L."/>
            <person name="Dedhia N."/>
            <person name="Gnoj L."/>
            <person name="Schutz K."/>
            <person name="Huang E."/>
            <person name="Spiegel L."/>
            <person name="Sekhon M."/>
            <person name="Murray J."/>
            <person name="Sheet P."/>
            <person name="Cordes M."/>
            <person name="Abu-Threideh J."/>
            <person name="Stoneking T."/>
            <person name="Kalicki J."/>
            <person name="Graves T."/>
            <person name="Harmon G."/>
            <person name="Edwards J."/>
            <person name="Latreille P."/>
            <person name="Courtney L."/>
            <person name="Cloud J."/>
            <person name="Abbott A."/>
            <person name="Scott K."/>
            <person name="Johnson D."/>
            <person name="Minx P."/>
            <person name="Bentley D."/>
            <person name="Fulton B."/>
            <person name="Miller N."/>
            <person name="Greco T."/>
            <person name="Kemp K."/>
            <person name="Kramer J."/>
            <person name="Fulton L."/>
            <person name="Mardis E."/>
            <person name="Dante M."/>
            <person name="Pepin K."/>
            <person name="Hillier L.W."/>
            <person name="Nelson J."/>
            <person name="Spieth J."/>
            <person name="Ryan E."/>
            <person name="Andrews S."/>
            <person name="Geisel C."/>
            <person name="Layman D."/>
            <person name="Du H."/>
            <person name="Ali J."/>
            <person name="Berghoff A."/>
            <person name="Jones K."/>
            <person name="Drone K."/>
            <person name="Cotton M."/>
            <person name="Joshu C."/>
            <person name="Antonoiu B."/>
            <person name="Zidanic M."/>
            <person name="Strong C."/>
            <person name="Sun H."/>
            <person name="Lamar B."/>
            <person name="Yordan C."/>
            <person name="Ma P."/>
            <person name="Zhong J."/>
            <person name="Preston R."/>
            <person name="Vil D."/>
            <person name="Shekher M."/>
            <person name="Matero A."/>
            <person name="Shah R."/>
            <person name="Swaby I.K."/>
            <person name="O'Shaughnessy A."/>
            <person name="Rodriguez M."/>
            <person name="Hoffman J."/>
            <person name="Till S."/>
            <person name="Granat S."/>
            <person name="Shohdy N."/>
            <person name="Hasegawa A."/>
            <person name="Hameed A."/>
            <person name="Lodhi M."/>
            <person name="Johnson A."/>
            <person name="Chen E."/>
            <person name="Marra M.A."/>
            <person name="Martienssen R."/>
            <person name="McCombie W.R."/>
        </authorList>
    </citation>
    <scope>NUCLEOTIDE SEQUENCE [LARGE SCALE GENOMIC DNA]</scope>
    <source>
        <strain>cv. Columbia</strain>
    </source>
</reference>
<reference key="3">
    <citation type="journal article" date="2017" name="Plant J.">
        <title>Araport11: a complete reannotation of the Arabidopsis thaliana reference genome.</title>
        <authorList>
            <person name="Cheng C.Y."/>
            <person name="Krishnakumar V."/>
            <person name="Chan A.P."/>
            <person name="Thibaud-Nissen F."/>
            <person name="Schobel S."/>
            <person name="Town C.D."/>
        </authorList>
    </citation>
    <scope>GENOME REANNOTATION</scope>
    <source>
        <strain>cv. Columbia</strain>
    </source>
</reference>
<reference key="4">
    <citation type="journal article" date="2000" name="Plant Mol. Biol.">
        <title>In Arabidopsis thaliana, 1% of the genome codes for a novel protein family unique to plants.</title>
        <authorList>
            <person name="Aubourg S."/>
            <person name="Boudet N."/>
            <person name="Kreis M."/>
            <person name="Lecharny A."/>
        </authorList>
    </citation>
    <scope>GENE FAMILY</scope>
</reference>
<reference key="5">
    <citation type="journal article" date="2004" name="Plant Cell">
        <title>Genome-wide analysis of Arabidopsis pentatricopeptide repeat proteins reveals their essential role in organelle biogenesis.</title>
        <authorList>
            <person name="Lurin C."/>
            <person name="Andres C."/>
            <person name="Aubourg S."/>
            <person name="Bellaoui M."/>
            <person name="Bitton F."/>
            <person name="Bruyere C."/>
            <person name="Caboche M."/>
            <person name="Debast C."/>
            <person name="Gualberto J."/>
            <person name="Hoffmann B."/>
            <person name="Lecharny A."/>
            <person name="Le Ret M."/>
            <person name="Martin-Magniette M.-L."/>
            <person name="Mireau H."/>
            <person name="Peeters N."/>
            <person name="Renou J.-P."/>
            <person name="Szurek B."/>
            <person name="Taconnat L."/>
            <person name="Small I."/>
        </authorList>
    </citation>
    <scope>GENE FAMILY</scope>
</reference>
<comment type="similarity">
    <text evidence="1">Belongs to the PPR family. PCMP-H subfamily.</text>
</comment>
<comment type="online information" name="Pentatricopeptide repeat proteins">
    <link uri="https://ppr.plantenergy.uwa.edu.au"/>
</comment>
<keyword id="KW-1185">Reference proteome</keyword>
<keyword id="KW-0677">Repeat</keyword>